<geneLocation type="mitochondrion"/>
<feature type="chain" id="PRO_0000060849" description="Cytochrome b">
    <location>
        <begin position="1"/>
        <end position="379"/>
    </location>
</feature>
<feature type="transmembrane region" description="Helical" evidence="2">
    <location>
        <begin position="33"/>
        <end position="53"/>
    </location>
</feature>
<feature type="transmembrane region" description="Helical" evidence="2">
    <location>
        <begin position="77"/>
        <end position="98"/>
    </location>
</feature>
<feature type="transmembrane region" description="Helical" evidence="2">
    <location>
        <begin position="113"/>
        <end position="133"/>
    </location>
</feature>
<feature type="transmembrane region" description="Helical" evidence="2">
    <location>
        <begin position="178"/>
        <end position="198"/>
    </location>
</feature>
<feature type="transmembrane region" description="Helical" evidence="2">
    <location>
        <begin position="226"/>
        <end position="246"/>
    </location>
</feature>
<feature type="transmembrane region" description="Helical" evidence="2">
    <location>
        <begin position="288"/>
        <end position="308"/>
    </location>
</feature>
<feature type="transmembrane region" description="Helical" evidence="2">
    <location>
        <begin position="320"/>
        <end position="340"/>
    </location>
</feature>
<feature type="transmembrane region" description="Helical" evidence="2">
    <location>
        <begin position="347"/>
        <end position="367"/>
    </location>
</feature>
<feature type="binding site" description="axial binding residue" evidence="2">
    <location>
        <position position="83"/>
    </location>
    <ligand>
        <name>heme b</name>
        <dbReference type="ChEBI" id="CHEBI:60344"/>
        <label>b562</label>
    </ligand>
    <ligandPart>
        <name>Fe</name>
        <dbReference type="ChEBI" id="CHEBI:18248"/>
    </ligandPart>
</feature>
<feature type="binding site" description="axial binding residue" evidence="2">
    <location>
        <position position="97"/>
    </location>
    <ligand>
        <name>heme b</name>
        <dbReference type="ChEBI" id="CHEBI:60344"/>
        <label>b566</label>
    </ligand>
    <ligandPart>
        <name>Fe</name>
        <dbReference type="ChEBI" id="CHEBI:18248"/>
    </ligandPart>
</feature>
<feature type="binding site" description="axial binding residue" evidence="2">
    <location>
        <position position="182"/>
    </location>
    <ligand>
        <name>heme b</name>
        <dbReference type="ChEBI" id="CHEBI:60344"/>
        <label>b562</label>
    </ligand>
    <ligandPart>
        <name>Fe</name>
        <dbReference type="ChEBI" id="CHEBI:18248"/>
    </ligandPart>
</feature>
<feature type="binding site" description="axial binding residue" evidence="2">
    <location>
        <position position="196"/>
    </location>
    <ligand>
        <name>heme b</name>
        <dbReference type="ChEBI" id="CHEBI:60344"/>
        <label>b566</label>
    </ligand>
    <ligandPart>
        <name>Fe</name>
        <dbReference type="ChEBI" id="CHEBI:18248"/>
    </ligandPart>
</feature>
<feature type="binding site" evidence="2">
    <location>
        <position position="201"/>
    </location>
    <ligand>
        <name>a ubiquinone</name>
        <dbReference type="ChEBI" id="CHEBI:16389"/>
    </ligand>
</feature>
<evidence type="ECO:0000250" key="1"/>
<evidence type="ECO:0000250" key="2">
    <source>
        <dbReference type="UniProtKB" id="P00157"/>
    </source>
</evidence>
<evidence type="ECO:0000255" key="3">
    <source>
        <dbReference type="PROSITE-ProRule" id="PRU00967"/>
    </source>
</evidence>
<evidence type="ECO:0000255" key="4">
    <source>
        <dbReference type="PROSITE-ProRule" id="PRU00968"/>
    </source>
</evidence>
<protein>
    <recommendedName>
        <fullName>Cytochrome b</fullName>
    </recommendedName>
    <alternativeName>
        <fullName>Complex III subunit 3</fullName>
    </alternativeName>
    <alternativeName>
        <fullName>Complex III subunit III</fullName>
    </alternativeName>
    <alternativeName>
        <fullName>Cytochrome b-c1 complex subunit 3</fullName>
    </alternativeName>
    <alternativeName>
        <fullName>Ubiquinol-cytochrome-c reductase complex cytochrome b subunit</fullName>
    </alternativeName>
</protein>
<accession>Q9TFA0</accession>
<comment type="function">
    <text evidence="2">Component of the ubiquinol-cytochrome c reductase complex (complex III or cytochrome b-c1 complex) that is part of the mitochondrial respiratory chain. The b-c1 complex mediates electron transfer from ubiquinol to cytochrome c. Contributes to the generation of a proton gradient across the mitochondrial membrane that is then used for ATP synthesis.</text>
</comment>
<comment type="cofactor">
    <cofactor evidence="2">
        <name>heme b</name>
        <dbReference type="ChEBI" id="CHEBI:60344"/>
    </cofactor>
    <text evidence="2">Binds 2 heme b groups non-covalently.</text>
</comment>
<comment type="subunit">
    <text evidence="2">The cytochrome bc1 complex contains 11 subunits: 3 respiratory subunits (MT-CYB, CYC1 and UQCRFS1), 2 core proteins (UQCRC1 and UQCRC2) and 6 low-molecular weight proteins (UQCRH/QCR6, UQCRB/QCR7, UQCRQ/QCR8, UQCR10/QCR9, UQCR11/QCR10 and a cleavage product of UQCRFS1). This cytochrome bc1 complex then forms a dimer.</text>
</comment>
<comment type="subcellular location">
    <subcellularLocation>
        <location evidence="2">Mitochondrion inner membrane</location>
        <topology evidence="2">Multi-pass membrane protein</topology>
    </subcellularLocation>
</comment>
<comment type="miscellaneous">
    <text evidence="1">Heme 1 (or BL or b562) is low-potential and absorbs at about 562 nm, and heme 2 (or BH or b566) is high-potential and absorbs at about 566 nm.</text>
</comment>
<comment type="similarity">
    <text evidence="3 4">Belongs to the cytochrome b family.</text>
</comment>
<comment type="caution">
    <text evidence="2">The full-length protein contains only eight transmembrane helices, not nine as predicted by bioinformatics tools.</text>
</comment>
<sequence>MTNTRKTHPLIKIINHSFIDLPAPSNISAWWNFGSLLGLCLAIQILTGLFLAMHYTSDTMTAFSSVTHICRDVNYGWLIRYMHANGASMFFICLFLHVGRGLYYGSYTYFETWNIGVILLFVVMATAFMGYVLPWGQMSFWGATVITNLLSAIPYIGTTLVEWIWGGFSVDKATLTRFFAFHFVLPFIIAALVMVHLLFLHETGSNNPSGLISDSDKIPFHPYYTIKXILGVLLLILALMILVLFSPDLLGDPDNYTPANPLSTPPHIKPEWYFLFAYTILRSIPNKLGGVLALVFSILILSLFPLLHVSKQRSMMFRPLSQCMFWFLVADLLTLTWIGGQPVEYPFITIGQLASILYFTIILLMLPIVSLIENKLLKW</sequence>
<dbReference type="EMBL" id="AF157838">
    <property type="protein sequence ID" value="AAD50122.1"/>
    <property type="molecule type" value="Genomic_DNA"/>
</dbReference>
<dbReference type="GO" id="GO:0005743">
    <property type="term" value="C:mitochondrial inner membrane"/>
    <property type="evidence" value="ECO:0007669"/>
    <property type="project" value="UniProtKB-SubCell"/>
</dbReference>
<dbReference type="GO" id="GO:0045275">
    <property type="term" value="C:respiratory chain complex III"/>
    <property type="evidence" value="ECO:0007669"/>
    <property type="project" value="InterPro"/>
</dbReference>
<dbReference type="GO" id="GO:0046872">
    <property type="term" value="F:metal ion binding"/>
    <property type="evidence" value="ECO:0007669"/>
    <property type="project" value="UniProtKB-KW"/>
</dbReference>
<dbReference type="GO" id="GO:0008121">
    <property type="term" value="F:ubiquinol-cytochrome-c reductase activity"/>
    <property type="evidence" value="ECO:0007669"/>
    <property type="project" value="InterPro"/>
</dbReference>
<dbReference type="GO" id="GO:0006122">
    <property type="term" value="P:mitochondrial electron transport, ubiquinol to cytochrome c"/>
    <property type="evidence" value="ECO:0007669"/>
    <property type="project" value="TreeGrafter"/>
</dbReference>
<dbReference type="CDD" id="cd00290">
    <property type="entry name" value="cytochrome_b_C"/>
    <property type="match status" value="1"/>
</dbReference>
<dbReference type="CDD" id="cd00284">
    <property type="entry name" value="Cytochrome_b_N"/>
    <property type="match status" value="1"/>
</dbReference>
<dbReference type="FunFam" id="1.20.810.10:FF:000002">
    <property type="entry name" value="Cytochrome b"/>
    <property type="match status" value="1"/>
</dbReference>
<dbReference type="Gene3D" id="1.20.810.10">
    <property type="entry name" value="Cytochrome Bc1 Complex, Chain C"/>
    <property type="match status" value="1"/>
</dbReference>
<dbReference type="InterPro" id="IPR005798">
    <property type="entry name" value="Cyt_b/b6_C"/>
</dbReference>
<dbReference type="InterPro" id="IPR036150">
    <property type="entry name" value="Cyt_b/b6_C_sf"/>
</dbReference>
<dbReference type="InterPro" id="IPR005797">
    <property type="entry name" value="Cyt_b/b6_N"/>
</dbReference>
<dbReference type="InterPro" id="IPR027387">
    <property type="entry name" value="Cytb/b6-like_sf"/>
</dbReference>
<dbReference type="InterPro" id="IPR030689">
    <property type="entry name" value="Cytochrome_b"/>
</dbReference>
<dbReference type="InterPro" id="IPR048260">
    <property type="entry name" value="Cytochrome_b_C_euk/bac"/>
</dbReference>
<dbReference type="InterPro" id="IPR048259">
    <property type="entry name" value="Cytochrome_b_N_euk/bac"/>
</dbReference>
<dbReference type="InterPro" id="IPR016174">
    <property type="entry name" value="Di-haem_cyt_TM"/>
</dbReference>
<dbReference type="PANTHER" id="PTHR19271">
    <property type="entry name" value="CYTOCHROME B"/>
    <property type="match status" value="1"/>
</dbReference>
<dbReference type="PANTHER" id="PTHR19271:SF16">
    <property type="entry name" value="CYTOCHROME B"/>
    <property type="match status" value="1"/>
</dbReference>
<dbReference type="Pfam" id="PF00032">
    <property type="entry name" value="Cytochrom_B_C"/>
    <property type="match status" value="1"/>
</dbReference>
<dbReference type="Pfam" id="PF00033">
    <property type="entry name" value="Cytochrome_B"/>
    <property type="match status" value="1"/>
</dbReference>
<dbReference type="PIRSF" id="PIRSF038885">
    <property type="entry name" value="COB"/>
    <property type="match status" value="1"/>
</dbReference>
<dbReference type="SUPFAM" id="SSF81648">
    <property type="entry name" value="a domain/subunit of cytochrome bc1 complex (Ubiquinol-cytochrome c reductase)"/>
    <property type="match status" value="1"/>
</dbReference>
<dbReference type="SUPFAM" id="SSF81342">
    <property type="entry name" value="Transmembrane di-heme cytochromes"/>
    <property type="match status" value="1"/>
</dbReference>
<dbReference type="PROSITE" id="PS51003">
    <property type="entry name" value="CYTB_CTER"/>
    <property type="match status" value="1"/>
</dbReference>
<dbReference type="PROSITE" id="PS51002">
    <property type="entry name" value="CYTB_NTER"/>
    <property type="match status" value="1"/>
</dbReference>
<gene>
    <name type="primary">MT-CYB</name>
    <name type="synonym">COB</name>
    <name type="synonym">CYTB</name>
    <name type="synonym">MTCYB</name>
</gene>
<keyword id="KW-0249">Electron transport</keyword>
<keyword id="KW-0349">Heme</keyword>
<keyword id="KW-0408">Iron</keyword>
<keyword id="KW-0472">Membrane</keyword>
<keyword id="KW-0479">Metal-binding</keyword>
<keyword id="KW-0496">Mitochondrion</keyword>
<keyword id="KW-0999">Mitochondrion inner membrane</keyword>
<keyword id="KW-0679">Respiratory chain</keyword>
<keyword id="KW-0812">Transmembrane</keyword>
<keyword id="KW-1133">Transmembrane helix</keyword>
<keyword id="KW-0813">Transport</keyword>
<keyword id="KW-0830">Ubiquinone</keyword>
<name>CYB_CYNLE</name>
<reference key="1">
    <citation type="submission" date="1999-06" db="EMBL/GenBank/DDBJ databases">
        <title>A molecular phylogeny of ground squirrels and prairie dogs.</title>
        <authorList>
            <person name="Harrison R.G."/>
            <person name="Sherman P.W."/>
            <person name="Yensen E."/>
            <person name="Hoffmann R.S."/>
            <person name="Bogdanowicz S.M."/>
        </authorList>
    </citation>
    <scope>NUCLEOTIDE SEQUENCE [GENOMIC DNA]</scope>
    <source>
        <strain>Isolate S1</strain>
    </source>
</reference>
<proteinExistence type="inferred from homology"/>
<organism>
    <name type="scientific">Cynomys leucurus</name>
    <name type="common">White-tailed prairie dog</name>
    <dbReference type="NCBI Taxonomy" id="99825"/>
    <lineage>
        <taxon>Eukaryota</taxon>
        <taxon>Metazoa</taxon>
        <taxon>Chordata</taxon>
        <taxon>Craniata</taxon>
        <taxon>Vertebrata</taxon>
        <taxon>Euteleostomi</taxon>
        <taxon>Mammalia</taxon>
        <taxon>Eutheria</taxon>
        <taxon>Euarchontoglires</taxon>
        <taxon>Glires</taxon>
        <taxon>Rodentia</taxon>
        <taxon>Sciuromorpha</taxon>
        <taxon>Sciuridae</taxon>
        <taxon>Xerinae</taxon>
        <taxon>Marmotini</taxon>
        <taxon>Cynomys</taxon>
    </lineage>
</organism>